<proteinExistence type="inferred from homology"/>
<name>PANB_PROMS</name>
<comment type="function">
    <text evidence="1">Catalyzes the reversible reaction in which hydroxymethyl group from 5,10-methylenetetrahydrofolate is transferred onto alpha-ketoisovalerate to form ketopantoate.</text>
</comment>
<comment type="catalytic activity">
    <reaction evidence="1">
        <text>3-methyl-2-oxobutanoate + (6R)-5,10-methylene-5,6,7,8-tetrahydrofolate + H2O = 2-dehydropantoate + (6S)-5,6,7,8-tetrahydrofolate</text>
        <dbReference type="Rhea" id="RHEA:11824"/>
        <dbReference type="ChEBI" id="CHEBI:11561"/>
        <dbReference type="ChEBI" id="CHEBI:11851"/>
        <dbReference type="ChEBI" id="CHEBI:15377"/>
        <dbReference type="ChEBI" id="CHEBI:15636"/>
        <dbReference type="ChEBI" id="CHEBI:57453"/>
        <dbReference type="EC" id="2.1.2.11"/>
    </reaction>
</comment>
<comment type="cofactor">
    <cofactor evidence="1">
        <name>Mg(2+)</name>
        <dbReference type="ChEBI" id="CHEBI:18420"/>
    </cofactor>
    <text evidence="1">Binds 1 Mg(2+) ion per subunit.</text>
</comment>
<comment type="pathway">
    <text evidence="1">Cofactor biosynthesis; (R)-pantothenate biosynthesis; (R)-pantoate from 3-methyl-2-oxobutanoate: step 1/2.</text>
</comment>
<comment type="subunit">
    <text evidence="1">Homodecamer; pentamer of dimers.</text>
</comment>
<comment type="subcellular location">
    <subcellularLocation>
        <location evidence="1">Cytoplasm</location>
    </subcellularLocation>
</comment>
<comment type="similarity">
    <text evidence="1">Belongs to the PanB family.</text>
</comment>
<protein>
    <recommendedName>
        <fullName evidence="1">3-methyl-2-oxobutanoate hydroxymethyltransferase</fullName>
        <ecNumber evidence="1">2.1.2.11</ecNumber>
    </recommendedName>
    <alternativeName>
        <fullName evidence="1">Ketopantoate hydroxymethyltransferase</fullName>
        <shortName evidence="1">KPHMT</shortName>
    </alternativeName>
</protein>
<evidence type="ECO:0000255" key="1">
    <source>
        <dbReference type="HAMAP-Rule" id="MF_00156"/>
    </source>
</evidence>
<reference key="1">
    <citation type="journal article" date="2007" name="PLoS Genet.">
        <title>Patterns and implications of gene gain and loss in the evolution of Prochlorococcus.</title>
        <authorList>
            <person name="Kettler G.C."/>
            <person name="Martiny A.C."/>
            <person name="Huang K."/>
            <person name="Zucker J."/>
            <person name="Coleman M.L."/>
            <person name="Rodrigue S."/>
            <person name="Chen F."/>
            <person name="Lapidus A."/>
            <person name="Ferriera S."/>
            <person name="Johnson J."/>
            <person name="Steglich C."/>
            <person name="Church G.M."/>
            <person name="Richardson P."/>
            <person name="Chisholm S.W."/>
        </authorList>
    </citation>
    <scope>NUCLEOTIDE SEQUENCE [LARGE SCALE GENOMIC DNA]</scope>
    <source>
        <strain>AS9601</strain>
    </source>
</reference>
<sequence>MLPSDLVNYKKKSRKIIALTAWDSISGSIAEQANVDLVLVGDSLAMVCLGYKSTLPLTLENIIYHTNAVSRGFKKKIEEQPLVVSDMPFLTYQCGEDKAVEYAGKIIQSTYAKAVKVEGAEPEIQKVISRLIRMGIPVMGHIGLTPQSYLNIGLRKQGESLASQEKIKKEASILEELGCFSIVLEHIPDLLAKEIKNSLTIPIIGIGAGNYCDGQVRVTADLLGLNDDQPPFCQPIIQGKKLFKDKLKEWVDSERLN</sequence>
<accession>A2BSN1</accession>
<organism>
    <name type="scientific">Prochlorococcus marinus (strain AS9601)</name>
    <dbReference type="NCBI Taxonomy" id="146891"/>
    <lineage>
        <taxon>Bacteria</taxon>
        <taxon>Bacillati</taxon>
        <taxon>Cyanobacteriota</taxon>
        <taxon>Cyanophyceae</taxon>
        <taxon>Synechococcales</taxon>
        <taxon>Prochlorococcaceae</taxon>
        <taxon>Prochlorococcus</taxon>
    </lineage>
</organism>
<gene>
    <name evidence="1" type="primary">panB</name>
    <name type="ordered locus">A9601_15091</name>
</gene>
<dbReference type="EC" id="2.1.2.11" evidence="1"/>
<dbReference type="EMBL" id="CP000551">
    <property type="protein sequence ID" value="ABM70792.1"/>
    <property type="molecule type" value="Genomic_DNA"/>
</dbReference>
<dbReference type="RefSeq" id="WP_011818928.1">
    <property type="nucleotide sequence ID" value="NC_008816.1"/>
</dbReference>
<dbReference type="SMR" id="A2BSN1"/>
<dbReference type="STRING" id="146891.A9601_15091"/>
<dbReference type="KEGG" id="pmb:A9601_15091"/>
<dbReference type="eggNOG" id="COG0413">
    <property type="taxonomic scope" value="Bacteria"/>
</dbReference>
<dbReference type="HOGENOM" id="CLU_036645_1_0_3"/>
<dbReference type="OrthoDB" id="9781789at2"/>
<dbReference type="UniPathway" id="UPA00028">
    <property type="reaction ID" value="UER00003"/>
</dbReference>
<dbReference type="Proteomes" id="UP000002590">
    <property type="component" value="Chromosome"/>
</dbReference>
<dbReference type="GO" id="GO:0005737">
    <property type="term" value="C:cytoplasm"/>
    <property type="evidence" value="ECO:0007669"/>
    <property type="project" value="UniProtKB-SubCell"/>
</dbReference>
<dbReference type="GO" id="GO:0003864">
    <property type="term" value="F:3-methyl-2-oxobutanoate hydroxymethyltransferase activity"/>
    <property type="evidence" value="ECO:0007669"/>
    <property type="project" value="UniProtKB-UniRule"/>
</dbReference>
<dbReference type="GO" id="GO:0000287">
    <property type="term" value="F:magnesium ion binding"/>
    <property type="evidence" value="ECO:0007669"/>
    <property type="project" value="TreeGrafter"/>
</dbReference>
<dbReference type="GO" id="GO:0015940">
    <property type="term" value="P:pantothenate biosynthetic process"/>
    <property type="evidence" value="ECO:0007669"/>
    <property type="project" value="UniProtKB-UniRule"/>
</dbReference>
<dbReference type="CDD" id="cd06557">
    <property type="entry name" value="KPHMT-like"/>
    <property type="match status" value="1"/>
</dbReference>
<dbReference type="Gene3D" id="3.20.20.60">
    <property type="entry name" value="Phosphoenolpyruvate-binding domains"/>
    <property type="match status" value="1"/>
</dbReference>
<dbReference type="HAMAP" id="MF_00156">
    <property type="entry name" value="PanB"/>
    <property type="match status" value="1"/>
</dbReference>
<dbReference type="InterPro" id="IPR003700">
    <property type="entry name" value="Pantoate_hydroxy_MeTrfase"/>
</dbReference>
<dbReference type="InterPro" id="IPR015813">
    <property type="entry name" value="Pyrv/PenolPyrv_kinase-like_dom"/>
</dbReference>
<dbReference type="InterPro" id="IPR040442">
    <property type="entry name" value="Pyrv_kinase-like_dom_sf"/>
</dbReference>
<dbReference type="NCBIfam" id="TIGR00222">
    <property type="entry name" value="panB"/>
    <property type="match status" value="1"/>
</dbReference>
<dbReference type="NCBIfam" id="NF001452">
    <property type="entry name" value="PRK00311.1"/>
    <property type="match status" value="1"/>
</dbReference>
<dbReference type="PANTHER" id="PTHR20881">
    <property type="entry name" value="3-METHYL-2-OXOBUTANOATE HYDROXYMETHYLTRANSFERASE"/>
    <property type="match status" value="1"/>
</dbReference>
<dbReference type="PANTHER" id="PTHR20881:SF0">
    <property type="entry name" value="3-METHYL-2-OXOBUTANOATE HYDROXYMETHYLTRANSFERASE"/>
    <property type="match status" value="1"/>
</dbReference>
<dbReference type="Pfam" id="PF02548">
    <property type="entry name" value="Pantoate_transf"/>
    <property type="match status" value="1"/>
</dbReference>
<dbReference type="PIRSF" id="PIRSF000388">
    <property type="entry name" value="Pantoate_hydroxy_MeTrfase"/>
    <property type="match status" value="1"/>
</dbReference>
<dbReference type="SUPFAM" id="SSF51621">
    <property type="entry name" value="Phosphoenolpyruvate/pyruvate domain"/>
    <property type="match status" value="1"/>
</dbReference>
<feature type="chain" id="PRO_0000297322" description="3-methyl-2-oxobutanoate hydroxymethyltransferase">
    <location>
        <begin position="1"/>
        <end position="257"/>
    </location>
</feature>
<feature type="active site" description="Proton acceptor" evidence="1">
    <location>
        <position position="185"/>
    </location>
</feature>
<feature type="binding site" evidence="1">
    <location>
        <begin position="42"/>
        <end position="43"/>
    </location>
    <ligand>
        <name>3-methyl-2-oxobutanoate</name>
        <dbReference type="ChEBI" id="CHEBI:11851"/>
    </ligand>
</feature>
<feature type="binding site" evidence="1">
    <location>
        <position position="42"/>
    </location>
    <ligand>
        <name>Mg(2+)</name>
        <dbReference type="ChEBI" id="CHEBI:18420"/>
    </ligand>
</feature>
<feature type="binding site" evidence="1">
    <location>
        <position position="86"/>
    </location>
    <ligand>
        <name>3-methyl-2-oxobutanoate</name>
        <dbReference type="ChEBI" id="CHEBI:11851"/>
    </ligand>
</feature>
<feature type="binding site" evidence="1">
    <location>
        <position position="86"/>
    </location>
    <ligand>
        <name>Mg(2+)</name>
        <dbReference type="ChEBI" id="CHEBI:18420"/>
    </ligand>
</feature>
<feature type="binding site" evidence="1">
    <location>
        <position position="116"/>
    </location>
    <ligand>
        <name>3-methyl-2-oxobutanoate</name>
        <dbReference type="ChEBI" id="CHEBI:11851"/>
    </ligand>
</feature>
<feature type="binding site" evidence="1">
    <location>
        <position position="118"/>
    </location>
    <ligand>
        <name>Mg(2+)</name>
        <dbReference type="ChEBI" id="CHEBI:18420"/>
    </ligand>
</feature>
<keyword id="KW-0963">Cytoplasm</keyword>
<keyword id="KW-0460">Magnesium</keyword>
<keyword id="KW-0479">Metal-binding</keyword>
<keyword id="KW-0566">Pantothenate biosynthesis</keyword>
<keyword id="KW-0808">Transferase</keyword>